<proteinExistence type="inferred from homology"/>
<name>FMT_STAAB</name>
<evidence type="ECO:0000255" key="1">
    <source>
        <dbReference type="HAMAP-Rule" id="MF_00182"/>
    </source>
</evidence>
<feature type="chain" id="PRO_1000020174" description="Methionyl-tRNA formyltransferase">
    <location>
        <begin position="1"/>
        <end position="311"/>
    </location>
</feature>
<feature type="binding site" evidence="1">
    <location>
        <begin position="109"/>
        <end position="112"/>
    </location>
    <ligand>
        <name>(6S)-5,6,7,8-tetrahydrofolate</name>
        <dbReference type="ChEBI" id="CHEBI:57453"/>
    </ligand>
</feature>
<protein>
    <recommendedName>
        <fullName evidence="1">Methionyl-tRNA formyltransferase</fullName>
        <ecNumber evidence="1">2.1.2.9</ecNumber>
    </recommendedName>
</protein>
<organism>
    <name type="scientific">Staphylococcus aureus (strain bovine RF122 / ET3-1)</name>
    <dbReference type="NCBI Taxonomy" id="273036"/>
    <lineage>
        <taxon>Bacteria</taxon>
        <taxon>Bacillati</taxon>
        <taxon>Bacillota</taxon>
        <taxon>Bacilli</taxon>
        <taxon>Bacillales</taxon>
        <taxon>Staphylococcaceae</taxon>
        <taxon>Staphylococcus</taxon>
    </lineage>
</organism>
<comment type="function">
    <text evidence="1">Attaches a formyl group to the free amino group of methionyl-tRNA(fMet). The formyl group appears to play a dual role in the initiator identity of N-formylmethionyl-tRNA by promoting its recognition by IF2 and preventing the misappropriation of this tRNA by the elongation apparatus.</text>
</comment>
<comment type="catalytic activity">
    <reaction evidence="1">
        <text>L-methionyl-tRNA(fMet) + (6R)-10-formyltetrahydrofolate = N-formyl-L-methionyl-tRNA(fMet) + (6S)-5,6,7,8-tetrahydrofolate + H(+)</text>
        <dbReference type="Rhea" id="RHEA:24380"/>
        <dbReference type="Rhea" id="RHEA-COMP:9952"/>
        <dbReference type="Rhea" id="RHEA-COMP:9953"/>
        <dbReference type="ChEBI" id="CHEBI:15378"/>
        <dbReference type="ChEBI" id="CHEBI:57453"/>
        <dbReference type="ChEBI" id="CHEBI:78530"/>
        <dbReference type="ChEBI" id="CHEBI:78844"/>
        <dbReference type="ChEBI" id="CHEBI:195366"/>
        <dbReference type="EC" id="2.1.2.9"/>
    </reaction>
</comment>
<comment type="similarity">
    <text evidence="1">Belongs to the Fmt family.</text>
</comment>
<reference key="1">
    <citation type="journal article" date="2007" name="PLoS ONE">
        <title>Molecular correlates of host specialization in Staphylococcus aureus.</title>
        <authorList>
            <person name="Herron-Olson L."/>
            <person name="Fitzgerald J.R."/>
            <person name="Musser J.M."/>
            <person name="Kapur V."/>
        </authorList>
    </citation>
    <scope>NUCLEOTIDE SEQUENCE [LARGE SCALE GENOMIC DNA]</scope>
    <source>
        <strain>bovine RF122 / ET3-1</strain>
    </source>
</reference>
<accession>Q2YXK0</accession>
<sequence length="311" mass="34238">MTKIIFMGTPDFSTTVLEMLIAEHDVIAVVTQPDRPVGRKRVMTPPPVKKVAMKYDLPVYQPEKLSGSEELEQLLQLDVDLIVTAAFGQLLPESLLALPKLGAINVHASLLPKYRGGAPIHQAIIDGEQETGITIMYMVKKLDAGNIISQQAIKIEENDNVGTMHDKLSVLGADLLKETLPSIIEGTNESVPQDDTQATFASNIRREDERISWNKPGRQVFNQIRGLSPWPVAYTTMDDTNLKIYDAELVETNKINEPGTIIETTKKAIIVATNDNEAVAIKDMQLAGKKRMLAANYLSGAQNILVGKKLI</sequence>
<dbReference type="EC" id="2.1.2.9" evidence="1"/>
<dbReference type="EMBL" id="AJ938182">
    <property type="protein sequence ID" value="CAI80769.1"/>
    <property type="molecule type" value="Genomic_DNA"/>
</dbReference>
<dbReference type="RefSeq" id="WP_000161290.1">
    <property type="nucleotide sequence ID" value="NC_007622.1"/>
</dbReference>
<dbReference type="SMR" id="Q2YXK0"/>
<dbReference type="KEGG" id="sab:SAB1080"/>
<dbReference type="HOGENOM" id="CLU_033347_1_1_9"/>
<dbReference type="GO" id="GO:0005829">
    <property type="term" value="C:cytosol"/>
    <property type="evidence" value="ECO:0007669"/>
    <property type="project" value="TreeGrafter"/>
</dbReference>
<dbReference type="GO" id="GO:0004479">
    <property type="term" value="F:methionyl-tRNA formyltransferase activity"/>
    <property type="evidence" value="ECO:0007669"/>
    <property type="project" value="UniProtKB-UniRule"/>
</dbReference>
<dbReference type="CDD" id="cd08646">
    <property type="entry name" value="FMT_core_Met-tRNA-FMT_N"/>
    <property type="match status" value="1"/>
</dbReference>
<dbReference type="CDD" id="cd08704">
    <property type="entry name" value="Met_tRNA_FMT_C"/>
    <property type="match status" value="1"/>
</dbReference>
<dbReference type="FunFam" id="3.40.50.170:FF:000004">
    <property type="entry name" value="Methionyl-tRNA formyltransferase"/>
    <property type="match status" value="1"/>
</dbReference>
<dbReference type="Gene3D" id="3.10.25.10">
    <property type="entry name" value="Formyl transferase, C-terminal domain"/>
    <property type="match status" value="1"/>
</dbReference>
<dbReference type="Gene3D" id="3.40.50.170">
    <property type="entry name" value="Formyl transferase, N-terminal domain"/>
    <property type="match status" value="1"/>
</dbReference>
<dbReference type="HAMAP" id="MF_00182">
    <property type="entry name" value="Formyl_trans"/>
    <property type="match status" value="1"/>
</dbReference>
<dbReference type="InterPro" id="IPR005794">
    <property type="entry name" value="Fmt"/>
</dbReference>
<dbReference type="InterPro" id="IPR005793">
    <property type="entry name" value="Formyl_trans_C"/>
</dbReference>
<dbReference type="InterPro" id="IPR037022">
    <property type="entry name" value="Formyl_trans_C_sf"/>
</dbReference>
<dbReference type="InterPro" id="IPR002376">
    <property type="entry name" value="Formyl_transf_N"/>
</dbReference>
<dbReference type="InterPro" id="IPR036477">
    <property type="entry name" value="Formyl_transf_N_sf"/>
</dbReference>
<dbReference type="InterPro" id="IPR011034">
    <property type="entry name" value="Formyl_transferase-like_C_sf"/>
</dbReference>
<dbReference type="InterPro" id="IPR001555">
    <property type="entry name" value="GART_AS"/>
</dbReference>
<dbReference type="InterPro" id="IPR044135">
    <property type="entry name" value="Met-tRNA-FMT_C"/>
</dbReference>
<dbReference type="InterPro" id="IPR041711">
    <property type="entry name" value="Met-tRNA-FMT_N"/>
</dbReference>
<dbReference type="NCBIfam" id="TIGR00460">
    <property type="entry name" value="fmt"/>
    <property type="match status" value="1"/>
</dbReference>
<dbReference type="PANTHER" id="PTHR11138">
    <property type="entry name" value="METHIONYL-TRNA FORMYLTRANSFERASE"/>
    <property type="match status" value="1"/>
</dbReference>
<dbReference type="PANTHER" id="PTHR11138:SF5">
    <property type="entry name" value="METHIONYL-TRNA FORMYLTRANSFERASE, MITOCHONDRIAL"/>
    <property type="match status" value="1"/>
</dbReference>
<dbReference type="Pfam" id="PF02911">
    <property type="entry name" value="Formyl_trans_C"/>
    <property type="match status" value="1"/>
</dbReference>
<dbReference type="Pfam" id="PF00551">
    <property type="entry name" value="Formyl_trans_N"/>
    <property type="match status" value="1"/>
</dbReference>
<dbReference type="SUPFAM" id="SSF50486">
    <property type="entry name" value="FMT C-terminal domain-like"/>
    <property type="match status" value="1"/>
</dbReference>
<dbReference type="SUPFAM" id="SSF53328">
    <property type="entry name" value="Formyltransferase"/>
    <property type="match status" value="1"/>
</dbReference>
<dbReference type="PROSITE" id="PS00373">
    <property type="entry name" value="GART"/>
    <property type="match status" value="1"/>
</dbReference>
<gene>
    <name evidence="1" type="primary">fmt</name>
    <name type="ordered locus">SAB1080</name>
</gene>
<keyword id="KW-0648">Protein biosynthesis</keyword>
<keyword id="KW-0808">Transferase</keyword>